<accession>Q6AR63</accession>
<feature type="chain" id="PRO_0000340944" description="4-hydroxy-tetrahydrodipicolinate synthase">
    <location>
        <begin position="1"/>
        <end position="297"/>
    </location>
</feature>
<feature type="active site" description="Proton donor/acceptor" evidence="1">
    <location>
        <position position="138"/>
    </location>
</feature>
<feature type="active site" description="Schiff-base intermediate with substrate" evidence="1">
    <location>
        <position position="166"/>
    </location>
</feature>
<feature type="binding site" evidence="1">
    <location>
        <position position="50"/>
    </location>
    <ligand>
        <name>pyruvate</name>
        <dbReference type="ChEBI" id="CHEBI:15361"/>
    </ligand>
</feature>
<feature type="binding site" evidence="1">
    <location>
        <position position="208"/>
    </location>
    <ligand>
        <name>pyruvate</name>
        <dbReference type="ChEBI" id="CHEBI:15361"/>
    </ligand>
</feature>
<feature type="site" description="Part of a proton relay during catalysis" evidence="1">
    <location>
        <position position="49"/>
    </location>
</feature>
<feature type="site" description="Part of a proton relay during catalysis" evidence="1">
    <location>
        <position position="112"/>
    </location>
</feature>
<reference key="1">
    <citation type="journal article" date="2004" name="Environ. Microbiol.">
        <title>The genome of Desulfotalea psychrophila, a sulfate-reducing bacterium from permanently cold Arctic sediments.</title>
        <authorList>
            <person name="Rabus R."/>
            <person name="Ruepp A."/>
            <person name="Frickey T."/>
            <person name="Rattei T."/>
            <person name="Fartmann B."/>
            <person name="Stark M."/>
            <person name="Bauer M."/>
            <person name="Zibat A."/>
            <person name="Lombardot T."/>
            <person name="Becker I."/>
            <person name="Amann J."/>
            <person name="Gellner K."/>
            <person name="Teeling H."/>
            <person name="Leuschner W.D."/>
            <person name="Gloeckner F.-O."/>
            <person name="Lupas A.N."/>
            <person name="Amann R."/>
            <person name="Klenk H.-P."/>
        </authorList>
    </citation>
    <scope>NUCLEOTIDE SEQUENCE [LARGE SCALE GENOMIC DNA]</scope>
    <source>
        <strain>DSM 12343 / LSv54</strain>
    </source>
</reference>
<sequence length="297" mass="31953">MGGVMEKFHGAYVAIITPFINGEVDEQSFVDLIEFQIANGTHGIVPCGTTGESATLSFDEHKQVMDLAIKTVAGRVPVIAGAGANNTLEAIDLSESAKESGADAILSVAPYYNKPSQEGIYQHFKAIAEAVDIPMFLYNVPGRTVVNIAPETTARLAGIDNIIGIKEACGCLEQISDVIRKCPEDFIVLSGDDFTSMPTNVIGGKGVISVISNVFPKGMAEMQEATFAGDWDRARQLHYQMYDMMKQMFAAPSPAPAKKALELMGVIREGLPRIPMTPIDDDNLANLKLAMKGLNLI</sequence>
<dbReference type="EC" id="4.3.3.7" evidence="1"/>
<dbReference type="EMBL" id="CR522870">
    <property type="protein sequence ID" value="CAG35161.1"/>
    <property type="molecule type" value="Genomic_DNA"/>
</dbReference>
<dbReference type="SMR" id="Q6AR63"/>
<dbReference type="STRING" id="177439.DP0432"/>
<dbReference type="KEGG" id="dps:DP0432"/>
<dbReference type="eggNOG" id="COG0329">
    <property type="taxonomic scope" value="Bacteria"/>
</dbReference>
<dbReference type="HOGENOM" id="CLU_049343_7_1_7"/>
<dbReference type="UniPathway" id="UPA00034">
    <property type="reaction ID" value="UER00017"/>
</dbReference>
<dbReference type="Proteomes" id="UP000000602">
    <property type="component" value="Chromosome"/>
</dbReference>
<dbReference type="GO" id="GO:0005829">
    <property type="term" value="C:cytosol"/>
    <property type="evidence" value="ECO:0007669"/>
    <property type="project" value="TreeGrafter"/>
</dbReference>
<dbReference type="GO" id="GO:0008840">
    <property type="term" value="F:4-hydroxy-tetrahydrodipicolinate synthase activity"/>
    <property type="evidence" value="ECO:0007669"/>
    <property type="project" value="UniProtKB-UniRule"/>
</dbReference>
<dbReference type="GO" id="GO:0019877">
    <property type="term" value="P:diaminopimelate biosynthetic process"/>
    <property type="evidence" value="ECO:0007669"/>
    <property type="project" value="UniProtKB-UniRule"/>
</dbReference>
<dbReference type="GO" id="GO:0009089">
    <property type="term" value="P:lysine biosynthetic process via diaminopimelate"/>
    <property type="evidence" value="ECO:0007669"/>
    <property type="project" value="UniProtKB-UniRule"/>
</dbReference>
<dbReference type="CDD" id="cd00950">
    <property type="entry name" value="DHDPS"/>
    <property type="match status" value="1"/>
</dbReference>
<dbReference type="Gene3D" id="3.20.20.70">
    <property type="entry name" value="Aldolase class I"/>
    <property type="match status" value="1"/>
</dbReference>
<dbReference type="HAMAP" id="MF_00418">
    <property type="entry name" value="DapA"/>
    <property type="match status" value="1"/>
</dbReference>
<dbReference type="InterPro" id="IPR013785">
    <property type="entry name" value="Aldolase_TIM"/>
</dbReference>
<dbReference type="InterPro" id="IPR005263">
    <property type="entry name" value="DapA"/>
</dbReference>
<dbReference type="InterPro" id="IPR002220">
    <property type="entry name" value="DapA-like"/>
</dbReference>
<dbReference type="InterPro" id="IPR020625">
    <property type="entry name" value="Schiff_base-form_aldolases_AS"/>
</dbReference>
<dbReference type="InterPro" id="IPR020624">
    <property type="entry name" value="Schiff_base-form_aldolases_CS"/>
</dbReference>
<dbReference type="NCBIfam" id="TIGR00674">
    <property type="entry name" value="dapA"/>
    <property type="match status" value="1"/>
</dbReference>
<dbReference type="PANTHER" id="PTHR12128:SF66">
    <property type="entry name" value="4-HYDROXY-2-OXOGLUTARATE ALDOLASE, MITOCHONDRIAL"/>
    <property type="match status" value="1"/>
</dbReference>
<dbReference type="PANTHER" id="PTHR12128">
    <property type="entry name" value="DIHYDRODIPICOLINATE SYNTHASE"/>
    <property type="match status" value="1"/>
</dbReference>
<dbReference type="Pfam" id="PF00701">
    <property type="entry name" value="DHDPS"/>
    <property type="match status" value="1"/>
</dbReference>
<dbReference type="PIRSF" id="PIRSF001365">
    <property type="entry name" value="DHDPS"/>
    <property type="match status" value="1"/>
</dbReference>
<dbReference type="PRINTS" id="PR00146">
    <property type="entry name" value="DHPICSNTHASE"/>
</dbReference>
<dbReference type="SMART" id="SM01130">
    <property type="entry name" value="DHDPS"/>
    <property type="match status" value="1"/>
</dbReference>
<dbReference type="SUPFAM" id="SSF51569">
    <property type="entry name" value="Aldolase"/>
    <property type="match status" value="1"/>
</dbReference>
<dbReference type="PROSITE" id="PS00665">
    <property type="entry name" value="DHDPS_1"/>
    <property type="match status" value="1"/>
</dbReference>
<dbReference type="PROSITE" id="PS00666">
    <property type="entry name" value="DHDPS_2"/>
    <property type="match status" value="1"/>
</dbReference>
<keyword id="KW-0028">Amino-acid biosynthesis</keyword>
<keyword id="KW-0963">Cytoplasm</keyword>
<keyword id="KW-0220">Diaminopimelate biosynthesis</keyword>
<keyword id="KW-0456">Lyase</keyword>
<keyword id="KW-0457">Lysine biosynthesis</keyword>
<keyword id="KW-1185">Reference proteome</keyword>
<keyword id="KW-0704">Schiff base</keyword>
<proteinExistence type="inferred from homology"/>
<gene>
    <name evidence="1" type="primary">dapA</name>
    <name type="ordered locus">DP0432</name>
</gene>
<protein>
    <recommendedName>
        <fullName evidence="1">4-hydroxy-tetrahydrodipicolinate synthase</fullName>
        <shortName evidence="1">HTPA synthase</shortName>
        <ecNumber evidence="1">4.3.3.7</ecNumber>
    </recommendedName>
</protein>
<evidence type="ECO:0000255" key="1">
    <source>
        <dbReference type="HAMAP-Rule" id="MF_00418"/>
    </source>
</evidence>
<evidence type="ECO:0000305" key="2"/>
<name>DAPA_DESPS</name>
<organism>
    <name type="scientific">Desulfotalea psychrophila (strain LSv54 / DSM 12343)</name>
    <dbReference type="NCBI Taxonomy" id="177439"/>
    <lineage>
        <taxon>Bacteria</taxon>
        <taxon>Pseudomonadati</taxon>
        <taxon>Thermodesulfobacteriota</taxon>
        <taxon>Desulfobulbia</taxon>
        <taxon>Desulfobulbales</taxon>
        <taxon>Desulfocapsaceae</taxon>
        <taxon>Desulfotalea</taxon>
    </lineage>
</organism>
<comment type="function">
    <text evidence="1">Catalyzes the condensation of (S)-aspartate-beta-semialdehyde [(S)-ASA] and pyruvate to 4-hydroxy-tetrahydrodipicolinate (HTPA).</text>
</comment>
<comment type="catalytic activity">
    <reaction evidence="1">
        <text>L-aspartate 4-semialdehyde + pyruvate = (2S,4S)-4-hydroxy-2,3,4,5-tetrahydrodipicolinate + H2O + H(+)</text>
        <dbReference type="Rhea" id="RHEA:34171"/>
        <dbReference type="ChEBI" id="CHEBI:15361"/>
        <dbReference type="ChEBI" id="CHEBI:15377"/>
        <dbReference type="ChEBI" id="CHEBI:15378"/>
        <dbReference type="ChEBI" id="CHEBI:67139"/>
        <dbReference type="ChEBI" id="CHEBI:537519"/>
        <dbReference type="EC" id="4.3.3.7"/>
    </reaction>
</comment>
<comment type="pathway">
    <text evidence="1">Amino-acid biosynthesis; L-lysine biosynthesis via DAP pathway; (S)-tetrahydrodipicolinate from L-aspartate: step 3/4.</text>
</comment>
<comment type="subunit">
    <text evidence="1">Homotetramer; dimer of dimers.</text>
</comment>
<comment type="subcellular location">
    <subcellularLocation>
        <location evidence="1">Cytoplasm</location>
    </subcellularLocation>
</comment>
<comment type="similarity">
    <text evidence="1">Belongs to the DapA family.</text>
</comment>
<comment type="caution">
    <text evidence="2">Was originally thought to be a dihydrodipicolinate synthase (DHDPS), catalyzing the condensation of (S)-aspartate-beta-semialdehyde [(S)-ASA] and pyruvate to dihydrodipicolinate (DHDP). However, it was shown in E.coli that the product of the enzymatic reaction is not dihydrodipicolinate but in fact (4S)-4-hydroxy-2,3,4,5-tetrahydro-(2S)-dipicolinic acid (HTPA), and that the consecutive dehydration reaction leading to DHDP is not spontaneous but catalyzed by DapB.</text>
</comment>